<reference key="1">
    <citation type="journal article" date="2006" name="Proc. Natl. Acad. Sci. U.S.A.">
        <title>Molecular genetic anatomy of inter- and intraserotype variation in the human bacterial pathogen group A Streptococcus.</title>
        <authorList>
            <person name="Beres S.B."/>
            <person name="Richter E.W."/>
            <person name="Nagiec M.J."/>
            <person name="Sumby P."/>
            <person name="Porcella S.F."/>
            <person name="DeLeo F.R."/>
            <person name="Musser J.M."/>
        </authorList>
    </citation>
    <scope>NUCLEOTIDE SEQUENCE [LARGE SCALE GENOMIC DNA]</scope>
    <source>
        <strain>MGAS10750</strain>
    </source>
</reference>
<feature type="chain" id="PRO_1000003076" description="Phospho-N-acetylmuramoyl-pentapeptide-transferase">
    <location>
        <begin position="1"/>
        <end position="336"/>
    </location>
</feature>
<feature type="transmembrane region" description="Helical" evidence="1">
    <location>
        <begin position="3"/>
        <end position="23"/>
    </location>
</feature>
<feature type="transmembrane region" description="Helical" evidence="1">
    <location>
        <begin position="53"/>
        <end position="73"/>
    </location>
</feature>
<feature type="transmembrane region" description="Helical" evidence="1">
    <location>
        <begin position="78"/>
        <end position="98"/>
    </location>
</feature>
<feature type="transmembrane region" description="Helical" evidence="1">
    <location>
        <begin position="118"/>
        <end position="138"/>
    </location>
</feature>
<feature type="transmembrane region" description="Helical" evidence="1">
    <location>
        <begin position="143"/>
        <end position="163"/>
    </location>
</feature>
<feature type="transmembrane region" description="Helical" evidence="1">
    <location>
        <begin position="174"/>
        <end position="194"/>
    </location>
</feature>
<feature type="transmembrane region" description="Helical" evidence="1">
    <location>
        <begin position="200"/>
        <end position="220"/>
    </location>
</feature>
<feature type="transmembrane region" description="Helical" evidence="1">
    <location>
        <begin position="226"/>
        <end position="246"/>
    </location>
</feature>
<feature type="transmembrane region" description="Helical" evidence="1">
    <location>
        <begin position="251"/>
        <end position="271"/>
    </location>
</feature>
<feature type="transmembrane region" description="Helical" evidence="1">
    <location>
        <begin position="316"/>
        <end position="336"/>
    </location>
</feature>
<comment type="function">
    <text evidence="1">Catalyzes the initial step of the lipid cycle reactions in the biosynthesis of the cell wall peptidoglycan: transfers peptidoglycan precursor phospho-MurNAc-pentapeptide from UDP-MurNAc-pentapeptide onto the lipid carrier undecaprenyl phosphate, yielding undecaprenyl-pyrophosphoryl-MurNAc-pentapeptide, known as lipid I.</text>
</comment>
<comment type="catalytic activity">
    <reaction evidence="1">
        <text>UDP-N-acetyl-alpha-D-muramoyl-L-alanyl-gamma-D-glutamyl-L-lysyl-D-alanyl-D-alanine + di-trans,octa-cis-undecaprenyl phosphate = Mur2Ac(oyl-L-Ala-gamma-D-Glu-L-Lys-D-Ala-D-Ala)-di-trans,octa-cis-undecaprenyl diphosphate + UMP</text>
        <dbReference type="Rhea" id="RHEA:21920"/>
        <dbReference type="ChEBI" id="CHEBI:57865"/>
        <dbReference type="ChEBI" id="CHEBI:60032"/>
        <dbReference type="ChEBI" id="CHEBI:60392"/>
        <dbReference type="ChEBI" id="CHEBI:70758"/>
        <dbReference type="EC" id="2.7.8.13"/>
    </reaction>
</comment>
<comment type="cofactor">
    <cofactor evidence="1">
        <name>Mg(2+)</name>
        <dbReference type="ChEBI" id="CHEBI:18420"/>
    </cofactor>
</comment>
<comment type="pathway">
    <text evidence="1">Cell wall biogenesis; peptidoglycan biosynthesis.</text>
</comment>
<comment type="subcellular location">
    <subcellularLocation>
        <location evidence="1">Cell membrane</location>
        <topology evidence="1">Multi-pass membrane protein</topology>
    </subcellularLocation>
</comment>
<comment type="similarity">
    <text evidence="1">Belongs to the glycosyltransferase 4 family. MraY subfamily.</text>
</comment>
<gene>
    <name evidence="1" type="primary">mraY</name>
    <name type="ordered locus">MGAS10750_Spy1475</name>
</gene>
<name>MRAY_STRPF</name>
<dbReference type="EC" id="2.7.8.13" evidence="1"/>
<dbReference type="EMBL" id="CP000262">
    <property type="protein sequence ID" value="ABF38425.1"/>
    <property type="molecule type" value="Genomic_DNA"/>
</dbReference>
<dbReference type="SMR" id="Q1J5G1"/>
<dbReference type="KEGG" id="spi:MGAS10750_Spy1475"/>
<dbReference type="HOGENOM" id="CLU_023982_0_1_9"/>
<dbReference type="UniPathway" id="UPA00219"/>
<dbReference type="Proteomes" id="UP000002434">
    <property type="component" value="Chromosome"/>
</dbReference>
<dbReference type="GO" id="GO:0005886">
    <property type="term" value="C:plasma membrane"/>
    <property type="evidence" value="ECO:0007669"/>
    <property type="project" value="UniProtKB-SubCell"/>
</dbReference>
<dbReference type="GO" id="GO:0046872">
    <property type="term" value="F:metal ion binding"/>
    <property type="evidence" value="ECO:0007669"/>
    <property type="project" value="UniProtKB-KW"/>
</dbReference>
<dbReference type="GO" id="GO:0008963">
    <property type="term" value="F:phospho-N-acetylmuramoyl-pentapeptide-transferase activity"/>
    <property type="evidence" value="ECO:0007669"/>
    <property type="project" value="UniProtKB-UniRule"/>
</dbReference>
<dbReference type="GO" id="GO:0051301">
    <property type="term" value="P:cell division"/>
    <property type="evidence" value="ECO:0007669"/>
    <property type="project" value="UniProtKB-KW"/>
</dbReference>
<dbReference type="GO" id="GO:0071555">
    <property type="term" value="P:cell wall organization"/>
    <property type="evidence" value="ECO:0007669"/>
    <property type="project" value="UniProtKB-KW"/>
</dbReference>
<dbReference type="GO" id="GO:0009252">
    <property type="term" value="P:peptidoglycan biosynthetic process"/>
    <property type="evidence" value="ECO:0007669"/>
    <property type="project" value="UniProtKB-UniRule"/>
</dbReference>
<dbReference type="GO" id="GO:0008360">
    <property type="term" value="P:regulation of cell shape"/>
    <property type="evidence" value="ECO:0007669"/>
    <property type="project" value="UniProtKB-KW"/>
</dbReference>
<dbReference type="CDD" id="cd06852">
    <property type="entry name" value="GT_MraY"/>
    <property type="match status" value="1"/>
</dbReference>
<dbReference type="HAMAP" id="MF_00038">
    <property type="entry name" value="MraY"/>
    <property type="match status" value="1"/>
</dbReference>
<dbReference type="InterPro" id="IPR000715">
    <property type="entry name" value="Glycosyl_transferase_4"/>
</dbReference>
<dbReference type="InterPro" id="IPR003524">
    <property type="entry name" value="PNAcMuramoyl-5peptid_Trfase"/>
</dbReference>
<dbReference type="InterPro" id="IPR018480">
    <property type="entry name" value="PNAcMuramoyl-5peptid_Trfase_CS"/>
</dbReference>
<dbReference type="NCBIfam" id="TIGR00445">
    <property type="entry name" value="mraY"/>
    <property type="match status" value="1"/>
</dbReference>
<dbReference type="PANTHER" id="PTHR22926">
    <property type="entry name" value="PHOSPHO-N-ACETYLMURAMOYL-PENTAPEPTIDE-TRANSFERASE"/>
    <property type="match status" value="1"/>
</dbReference>
<dbReference type="PANTHER" id="PTHR22926:SF5">
    <property type="entry name" value="PHOSPHO-N-ACETYLMURAMOYL-PENTAPEPTIDE-TRANSFERASE HOMOLOG"/>
    <property type="match status" value="1"/>
</dbReference>
<dbReference type="Pfam" id="PF00953">
    <property type="entry name" value="Glycos_transf_4"/>
    <property type="match status" value="1"/>
</dbReference>
<dbReference type="Pfam" id="PF10555">
    <property type="entry name" value="MraY_sig1"/>
    <property type="match status" value="1"/>
</dbReference>
<dbReference type="PROSITE" id="PS01348">
    <property type="entry name" value="MRAY_2"/>
    <property type="match status" value="1"/>
</dbReference>
<sequence>MFLTLIAAIISFMVSAFTMPYFIKFYQLKKIGGQQMHEDVKQHLAKAGTPTMGGTVFLLVATAVSLLVSLFSIKNTQSLALISGILSIVVIYGIIGFLDDFLKIFKQINEGLTAKQKLALQLAGGLMFYFLHVSPSGISSINVFGYQLSLGIFYLFFVLFWVVGFSNAVNLTDGIDGLASISVVISLVTYGVIAYVQGQFDVLLLIGTMIGALLGFFCFNHKPAKVFMGDVGSLALGAMLAAISIALRQEWTLLIIGIVYVLETSSVMLQVSYFKYTKKKYGEGRRIFRMTPFHHHLELGGLSGKGKKWSEWQVDAFLWGVGSLASLLVLAILYVF</sequence>
<proteinExistence type="inferred from homology"/>
<keyword id="KW-0131">Cell cycle</keyword>
<keyword id="KW-0132">Cell division</keyword>
<keyword id="KW-1003">Cell membrane</keyword>
<keyword id="KW-0133">Cell shape</keyword>
<keyword id="KW-0961">Cell wall biogenesis/degradation</keyword>
<keyword id="KW-0460">Magnesium</keyword>
<keyword id="KW-0472">Membrane</keyword>
<keyword id="KW-0479">Metal-binding</keyword>
<keyword id="KW-0573">Peptidoglycan synthesis</keyword>
<keyword id="KW-0808">Transferase</keyword>
<keyword id="KW-0812">Transmembrane</keyword>
<keyword id="KW-1133">Transmembrane helix</keyword>
<organism>
    <name type="scientific">Streptococcus pyogenes serotype M4 (strain MGAS10750)</name>
    <dbReference type="NCBI Taxonomy" id="370554"/>
    <lineage>
        <taxon>Bacteria</taxon>
        <taxon>Bacillati</taxon>
        <taxon>Bacillota</taxon>
        <taxon>Bacilli</taxon>
        <taxon>Lactobacillales</taxon>
        <taxon>Streptococcaceae</taxon>
        <taxon>Streptococcus</taxon>
    </lineage>
</organism>
<evidence type="ECO:0000255" key="1">
    <source>
        <dbReference type="HAMAP-Rule" id="MF_00038"/>
    </source>
</evidence>
<accession>Q1J5G1</accession>
<protein>
    <recommendedName>
        <fullName evidence="1">Phospho-N-acetylmuramoyl-pentapeptide-transferase</fullName>
        <ecNumber evidence="1">2.7.8.13</ecNumber>
    </recommendedName>
    <alternativeName>
        <fullName evidence="1">UDP-MurNAc-pentapeptide phosphotransferase</fullName>
    </alternativeName>
</protein>